<gene>
    <name type="ordered locus">MA_3125</name>
</gene>
<organism>
    <name type="scientific">Methanosarcina acetivorans (strain ATCC 35395 / DSM 2834 / JCM 12185 / C2A)</name>
    <dbReference type="NCBI Taxonomy" id="188937"/>
    <lineage>
        <taxon>Archaea</taxon>
        <taxon>Methanobacteriati</taxon>
        <taxon>Methanobacteriota</taxon>
        <taxon>Stenosarchaea group</taxon>
        <taxon>Methanomicrobia</taxon>
        <taxon>Methanosarcinales</taxon>
        <taxon>Methanosarcinaceae</taxon>
        <taxon>Methanosarcina</taxon>
    </lineage>
</organism>
<dbReference type="EMBL" id="AE010299">
    <property type="protein sequence ID" value="AAM06498.1"/>
    <property type="molecule type" value="Genomic_DNA"/>
</dbReference>
<dbReference type="SMR" id="Q8TLB3"/>
<dbReference type="STRING" id="188937.MA_3125"/>
<dbReference type="EnsemblBacteria" id="AAM06498">
    <property type="protein sequence ID" value="AAM06498"/>
    <property type="gene ID" value="MA_3125"/>
</dbReference>
<dbReference type="KEGG" id="mac:MA_3125"/>
<dbReference type="HOGENOM" id="CLU_106567_0_0_2"/>
<dbReference type="InParanoid" id="Q8TLB3"/>
<dbReference type="OrthoDB" id="136726at2157"/>
<dbReference type="PhylomeDB" id="Q8TLB3"/>
<dbReference type="Proteomes" id="UP000002487">
    <property type="component" value="Chromosome"/>
</dbReference>
<dbReference type="InterPro" id="IPR008887">
    <property type="entry name" value="UPF0228"/>
</dbReference>
<dbReference type="Pfam" id="PF05727">
    <property type="entry name" value="UPF0228"/>
    <property type="match status" value="1"/>
</dbReference>
<accession>Q8TLB3</accession>
<proteinExistence type="inferred from homology"/>
<reference key="1">
    <citation type="journal article" date="2002" name="Genome Res.">
        <title>The genome of Methanosarcina acetivorans reveals extensive metabolic and physiological diversity.</title>
        <authorList>
            <person name="Galagan J.E."/>
            <person name="Nusbaum C."/>
            <person name="Roy A."/>
            <person name="Endrizzi M.G."/>
            <person name="Macdonald P."/>
            <person name="FitzHugh W."/>
            <person name="Calvo S."/>
            <person name="Engels R."/>
            <person name="Smirnov S."/>
            <person name="Atnoor D."/>
            <person name="Brown A."/>
            <person name="Allen N."/>
            <person name="Naylor J."/>
            <person name="Stange-Thomann N."/>
            <person name="DeArellano K."/>
            <person name="Johnson R."/>
            <person name="Linton L."/>
            <person name="McEwan P."/>
            <person name="McKernan K."/>
            <person name="Talamas J."/>
            <person name="Tirrell A."/>
            <person name="Ye W."/>
            <person name="Zimmer A."/>
            <person name="Barber R.D."/>
            <person name="Cann I."/>
            <person name="Graham D.E."/>
            <person name="Grahame D.A."/>
            <person name="Guss A.M."/>
            <person name="Hedderich R."/>
            <person name="Ingram-Smith C."/>
            <person name="Kuettner H.C."/>
            <person name="Krzycki J.A."/>
            <person name="Leigh J.A."/>
            <person name="Li W."/>
            <person name="Liu J."/>
            <person name="Mukhopadhyay B."/>
            <person name="Reeve J.N."/>
            <person name="Smith K."/>
            <person name="Springer T.A."/>
            <person name="Umayam L.A."/>
            <person name="White O."/>
            <person name="White R.H."/>
            <person name="de Macario E.C."/>
            <person name="Ferry J.G."/>
            <person name="Jarrell K.F."/>
            <person name="Jing H."/>
            <person name="Macario A.J.L."/>
            <person name="Paulsen I.T."/>
            <person name="Pritchett M."/>
            <person name="Sowers K.R."/>
            <person name="Swanson R.V."/>
            <person name="Zinder S.H."/>
            <person name="Lander E."/>
            <person name="Metcalf W.W."/>
            <person name="Birren B."/>
        </authorList>
    </citation>
    <scope>NUCLEOTIDE SEQUENCE [LARGE SCALE GENOMIC DNA]</scope>
    <source>
        <strain>ATCC 35395 / DSM 2834 / JCM 12185 / C2A</strain>
    </source>
</reference>
<evidence type="ECO:0000305" key="1"/>
<sequence>MKISKEITIFIVFLTLVVLLGLFTNPLSDIRTPANNELKVGGMNIRFEDGASESEVKAVLENHNMTTNYSIDCNTGSVGNKYYIMVDKDNLDIRRELRKGMEKENKDWIISSSATGIRKGDSYVIAVSEQAVNDEKFLSILNKYDTKVKKFVWCYISFEKPDGSRYWIPEEDAVKMKNELENNESIFTVSIDYINDQ</sequence>
<name>Y3125_METAC</name>
<feature type="chain" id="PRO_0000220399" description="UPF0228 protein MA_3125">
    <location>
        <begin position="1"/>
        <end position="197"/>
    </location>
</feature>
<protein>
    <recommendedName>
        <fullName>UPF0228 protein MA_3125</fullName>
    </recommendedName>
</protein>
<comment type="similarity">
    <text evidence="1">Belongs to the UPF0228 family.</text>
</comment>
<keyword id="KW-1185">Reference proteome</keyword>